<organism>
    <name type="scientific">Sus scrofa</name>
    <name type="common">Pig</name>
    <dbReference type="NCBI Taxonomy" id="9823"/>
    <lineage>
        <taxon>Eukaryota</taxon>
        <taxon>Metazoa</taxon>
        <taxon>Chordata</taxon>
        <taxon>Craniata</taxon>
        <taxon>Vertebrata</taxon>
        <taxon>Euteleostomi</taxon>
        <taxon>Mammalia</taxon>
        <taxon>Eutheria</taxon>
        <taxon>Laurasiatheria</taxon>
        <taxon>Artiodactyla</taxon>
        <taxon>Suina</taxon>
        <taxon>Suidae</taxon>
        <taxon>Sus</taxon>
    </lineage>
</organism>
<sequence length="62" mass="6893">MARKKFSGLEIXLIVLFAIVLSIAIALVVVXASKXPAVIKLPSDPIPTLRMEMTYHTDYMLE</sequence>
<accession>P56729</accession>
<comment type="function">
    <text evidence="1">Plays an important role in the final stage of carbohydrate digestion. Isomaltase activity is specific for both alpha-1,4- and alpha-1,6-oligosaccharides (By similarity).</text>
</comment>
<comment type="catalytic activity">
    <reaction>
        <text>Hydrolysis of sucrose and maltose by an alpha-D-glucosidase-type action.</text>
        <dbReference type="EC" id="3.2.1.48"/>
    </reaction>
</comment>
<comment type="catalytic activity">
    <reaction>
        <text>Hydrolysis of (1-&gt;6)-alpha-D-glucosidic linkages in some oligosaccharides produced from starch and glycogen by alpha-amylase, and in isomaltose.</text>
        <dbReference type="EC" id="3.2.1.10"/>
    </reaction>
</comment>
<comment type="subunit">
    <text>The resulting sucrase and isomaltase subunits stay associated with one another in a complex by non-covalent linkages.</text>
</comment>
<comment type="subcellular location">
    <subcellularLocation>
        <location evidence="1">Apical cell membrane</location>
        <topology evidence="1">Single-pass type II membrane protein</topology>
    </subcellularLocation>
    <text evidence="1">Brush border.</text>
</comment>
<comment type="PTM">
    <text>The precursor is proteolytically cleaved when exposed to pancreatic proteases in the intestinal lumen.</text>
</comment>
<comment type="PTM">
    <text evidence="4">Sulfated.</text>
</comment>
<comment type="similarity">
    <text evidence="6">Belongs to the glycosyl hydrolase 31 family.</text>
</comment>
<evidence type="ECO:0000250" key="1"/>
<evidence type="ECO:0000250" key="2">
    <source>
        <dbReference type="UniProtKB" id="P14410"/>
    </source>
</evidence>
<evidence type="ECO:0000255" key="3"/>
<evidence type="ECO:0000269" key="4">
    <source>
    </source>
</evidence>
<evidence type="ECO:0000269" key="5">
    <source>
    </source>
</evidence>
<evidence type="ECO:0000305" key="6"/>
<proteinExistence type="evidence at protein level"/>
<keyword id="KW-1003">Cell membrane</keyword>
<keyword id="KW-0903">Direct protein sequencing</keyword>
<keyword id="KW-0326">Glycosidase</keyword>
<keyword id="KW-0378">Hydrolase</keyword>
<keyword id="KW-0472">Membrane</keyword>
<keyword id="KW-0511">Multifunctional enzyme</keyword>
<keyword id="KW-0597">Phosphoprotein</keyword>
<keyword id="KW-1185">Reference proteome</keyword>
<keyword id="KW-0677">Repeat</keyword>
<keyword id="KW-0735">Signal-anchor</keyword>
<keyword id="KW-0765">Sulfation</keyword>
<keyword id="KW-0812">Transmembrane</keyword>
<keyword id="KW-1133">Transmembrane helix</keyword>
<reference key="1">
    <citation type="journal article" date="1982" name="FEBS Lett.">
        <title>N-terminal sequences of pig intestinal sucrase-isomaltase and pro-sucrase-isomaltase. Implications for the biosynthesis and membrane insertion of pro-sucrase-isomaltase.</title>
        <authorList>
            <person name="Sjoestroem H."/>
            <person name="Noren O."/>
            <person name="Christiansen L.A."/>
            <person name="Wacker H."/>
            <person name="Spiess M."/>
            <person name="Bigler-Meier B."/>
            <person name="Rickli E.E."/>
            <person name="Semenza G."/>
        </authorList>
    </citation>
    <scope>PROTEIN SEQUENCE OF 2-62</scope>
</reference>
<reference key="2">
    <citation type="journal article" date="1987" name="EMBO J.">
        <title>Tyrosine sulfation, a post-translational modification of microvillar enzymes in the small intestinal enterocyte.</title>
        <authorList>
            <person name="Danielsen E.M."/>
        </authorList>
    </citation>
    <scope>SULFATION</scope>
</reference>
<name>SUIS_PIG</name>
<protein>
    <recommendedName>
        <fullName>Sucrase-isomaltase, intestinal</fullName>
    </recommendedName>
    <component>
        <recommendedName>
            <fullName>Sucrase</fullName>
            <ecNumber>3.2.1.48</ecNumber>
        </recommendedName>
    </component>
    <component>
        <recommendedName>
            <fullName>Isomaltase</fullName>
            <ecNumber>3.2.1.10</ecNumber>
        </recommendedName>
    </component>
</protein>
<feature type="initiator methionine" description="Removed" evidence="5">
    <location>
        <position position="1"/>
    </location>
</feature>
<feature type="chain" id="PRO_0000018554" description="Isomaltase">
    <location>
        <begin position="2"/>
        <end position="38" status="greater than"/>
    </location>
</feature>
<feature type="chain" id="PRO_0000018555" description="Sucrase">
    <location>
        <begin position="39"/>
        <end position="62" status="greater than"/>
    </location>
</feature>
<feature type="topological domain" description="Cytoplasmic" evidence="3">
    <location>
        <begin position="2"/>
        <end position="12"/>
    </location>
</feature>
<feature type="transmembrane region" description="Helical; Signal-anchor for type II membrane protein" evidence="3">
    <location>
        <begin position="13"/>
        <end position="32"/>
    </location>
</feature>
<feature type="topological domain" description="Lumenal" evidence="3">
    <location>
        <begin position="33"/>
        <end position="38" status="greater than"/>
    </location>
</feature>
<feature type="modified residue" description="Phosphoserine; by PKA" evidence="2">
    <location>
        <position position="7"/>
    </location>
</feature>
<feature type="modified residue" description="Sulfotyrosine" evidence="3">
    <location>
        <position position="59"/>
    </location>
</feature>
<feature type="unsure residue">
    <location>
        <position position="33"/>
    </location>
</feature>
<feature type="unsure residue">
    <location>
        <position position="34"/>
    </location>
</feature>
<feature type="unsure residue" description="M or V">
    <location>
        <position position="51"/>
    </location>
</feature>
<feature type="unsure residue" description="M or V">
    <location>
        <position position="53"/>
    </location>
</feature>
<feature type="unsure residue" description="T or K">
    <location>
        <position position="54"/>
    </location>
</feature>
<feature type="unsure residue" description="T or K">
    <location>
        <position position="57"/>
    </location>
</feature>
<feature type="unsure residue" description="M or V">
    <location>
        <position position="60"/>
    </location>
</feature>
<feature type="non-consecutive residues" evidence="6">
    <location>
        <begin position="38"/>
        <end position="39"/>
    </location>
</feature>
<feature type="non-terminal residue">
    <location>
        <position position="62"/>
    </location>
</feature>
<gene>
    <name type="primary">SI</name>
</gene>
<dbReference type="EC" id="3.2.1.48"/>
<dbReference type="EC" id="3.2.1.10"/>
<dbReference type="PIR" id="A25987">
    <property type="entry name" value="A25987"/>
</dbReference>
<dbReference type="STRING" id="9823.ENSSSCP00000023767"/>
<dbReference type="PeptideAtlas" id="P56729"/>
<dbReference type="InParanoid" id="P56729"/>
<dbReference type="Proteomes" id="UP000008227">
    <property type="component" value="Unplaced"/>
</dbReference>
<dbReference type="Proteomes" id="UP000314985">
    <property type="component" value="Unplaced"/>
</dbReference>
<dbReference type="Proteomes" id="UP000694570">
    <property type="component" value="Unplaced"/>
</dbReference>
<dbReference type="Proteomes" id="UP000694571">
    <property type="component" value="Unplaced"/>
</dbReference>
<dbReference type="Proteomes" id="UP000694720">
    <property type="component" value="Unplaced"/>
</dbReference>
<dbReference type="Proteomes" id="UP000694722">
    <property type="component" value="Unplaced"/>
</dbReference>
<dbReference type="Proteomes" id="UP000694723">
    <property type="component" value="Unplaced"/>
</dbReference>
<dbReference type="Proteomes" id="UP000694724">
    <property type="component" value="Unplaced"/>
</dbReference>
<dbReference type="Proteomes" id="UP000694725">
    <property type="component" value="Unplaced"/>
</dbReference>
<dbReference type="Proteomes" id="UP000694726">
    <property type="component" value="Unplaced"/>
</dbReference>
<dbReference type="Proteomes" id="UP000694727">
    <property type="component" value="Unplaced"/>
</dbReference>
<dbReference type="Proteomes" id="UP000694728">
    <property type="component" value="Unplaced"/>
</dbReference>
<dbReference type="GO" id="GO:0016324">
    <property type="term" value="C:apical plasma membrane"/>
    <property type="evidence" value="ECO:0007669"/>
    <property type="project" value="UniProtKB-SubCell"/>
</dbReference>
<dbReference type="GO" id="GO:0004574">
    <property type="term" value="F:oligo-1,6-glucosidase activity"/>
    <property type="evidence" value="ECO:0007669"/>
    <property type="project" value="UniProtKB-EC"/>
</dbReference>
<dbReference type="GO" id="GO:0004575">
    <property type="term" value="F:sucrose alpha-glucosidase activity"/>
    <property type="evidence" value="ECO:0007669"/>
    <property type="project" value="UniProtKB-EC"/>
</dbReference>